<accession>P46997</accession>
<accession>D6VW25</accession>
<protein>
    <recommendedName>
        <fullName>J protein JJJ2</fullName>
    </recommendedName>
</protein>
<sequence>MSQVIEPQLDRTTYYSILGLTSNATSSEVHKSYLKLARLLHPDKTKSDKSEELFKAVVHAHSILTDEDQKLRYDRDLKIKGLHTYQPKKNCHIFKTKAKESQGASPTLGQSEAYHRQNKPYEQQPYGFGVGKKMTSSSKSKVPIFKSFNLKSYQRNHYYSSKKERKHGSPDIDSLFHETNGASKVRMTDAGKMDTNSQFQEIWEILGKNAYTHKSYSEDPNSCLGSALSDHEEEEEAGKQQQQQQQQQQQQQHYGMTSKSSSPDEEKKNNKEPKRESRVSPEENGEEETGHKQFKLPKTSTFSSGSHDSNLQSPFYNHEYRHYARSKFECKNQFRKSVSPIKEIPATTSANEGWNILRDIIEKLNISNVDDRNKDLLFRRDEIGDKNHSDSIDIENLSIKEPKGMKRRKKDDISLEELFQSLPREKDYFMMDAINDSLESINLFKKPKTTQSHEQGGTFAQAESNRAKFKPLLEQCGITPEILDLEIPEIPEFDAVADLETLKLNVQLFNNQCNKLKETIHQVSLQRLRADTQFSDMLTQKQSIMVWKTYLEFDKSLMDKLNILQERQMQVIKIFSERCDGKV</sequence>
<name>JJJ2_YEAST</name>
<proteinExistence type="evidence at protein level"/>
<evidence type="ECO:0000255" key="1">
    <source>
        <dbReference type="PROSITE-ProRule" id="PRU00286"/>
    </source>
</evidence>
<evidence type="ECO:0000256" key="2">
    <source>
        <dbReference type="SAM" id="MobiDB-lite"/>
    </source>
</evidence>
<evidence type="ECO:0000269" key="3">
    <source>
    </source>
</evidence>
<evidence type="ECO:0000269" key="4">
    <source>
    </source>
</evidence>
<evidence type="ECO:0000305" key="5"/>
<evidence type="ECO:0007744" key="6">
    <source>
    </source>
</evidence>
<feature type="chain" id="PRO_0000071142" description="J protein JJJ2">
    <location>
        <begin position="1"/>
        <end position="583"/>
    </location>
</feature>
<feature type="domain" description="J" evidence="1">
    <location>
        <begin position="11"/>
        <end position="79"/>
    </location>
</feature>
<feature type="region of interest" description="Disordered" evidence="2">
    <location>
        <begin position="215"/>
        <end position="313"/>
    </location>
</feature>
<feature type="compositionally biased region" description="Polar residues" evidence="2">
    <location>
        <begin position="215"/>
        <end position="224"/>
    </location>
</feature>
<feature type="compositionally biased region" description="Low complexity" evidence="2">
    <location>
        <begin position="240"/>
        <end position="252"/>
    </location>
</feature>
<feature type="compositionally biased region" description="Basic and acidic residues" evidence="2">
    <location>
        <begin position="262"/>
        <end position="281"/>
    </location>
</feature>
<feature type="compositionally biased region" description="Polar residues" evidence="2">
    <location>
        <begin position="298"/>
        <end position="313"/>
    </location>
</feature>
<feature type="modified residue" description="Phosphoserine" evidence="6">
    <location>
        <position position="229"/>
    </location>
</feature>
<comment type="subcellular location">
    <subcellularLocation>
        <location evidence="3">Cytoplasm</location>
    </subcellularLocation>
    <subcellularLocation>
        <location evidence="3">Nucleus</location>
    </subcellularLocation>
</comment>
<comment type="miscellaneous">
    <text evidence="4">Present with 184 molecules/cell in log phase SD medium.</text>
</comment>
<comment type="sequence caution" evidence="5">
    <conflict type="erroneous termination">
        <sequence resource="EMBL-CDS" id="CAA89457"/>
    </conflict>
    <text>Truncated C-terminus.</text>
</comment>
<organism>
    <name type="scientific">Saccharomyces cerevisiae (strain ATCC 204508 / S288c)</name>
    <name type="common">Baker's yeast</name>
    <dbReference type="NCBI Taxonomy" id="559292"/>
    <lineage>
        <taxon>Eukaryota</taxon>
        <taxon>Fungi</taxon>
        <taxon>Dikarya</taxon>
        <taxon>Ascomycota</taxon>
        <taxon>Saccharomycotina</taxon>
        <taxon>Saccharomycetes</taxon>
        <taxon>Saccharomycetales</taxon>
        <taxon>Saccharomycetaceae</taxon>
        <taxon>Saccharomyces</taxon>
    </lineage>
</organism>
<dbReference type="EMBL" id="Z49437">
    <property type="protein sequence ID" value="CAA89457.1"/>
    <property type="status" value="ALT_SEQ"/>
    <property type="molecule type" value="Genomic_DNA"/>
</dbReference>
<dbReference type="EMBL" id="BK006943">
    <property type="protein sequence ID" value="DAA08641.1"/>
    <property type="molecule type" value="Genomic_DNA"/>
</dbReference>
<dbReference type="PIR" id="S56945">
    <property type="entry name" value="S56945"/>
</dbReference>
<dbReference type="RefSeq" id="NP_012373.2">
    <property type="nucleotide sequence ID" value="NM_001181595.1"/>
</dbReference>
<dbReference type="SMR" id="P46997"/>
<dbReference type="BioGRID" id="33597">
    <property type="interactions" value="44"/>
</dbReference>
<dbReference type="DIP" id="DIP-4033N"/>
<dbReference type="FunCoup" id="P46997">
    <property type="interactions" value="62"/>
</dbReference>
<dbReference type="IntAct" id="P46997">
    <property type="interactions" value="1"/>
</dbReference>
<dbReference type="MINT" id="P46997"/>
<dbReference type="STRING" id="4932.YJL162C"/>
<dbReference type="iPTMnet" id="P46997"/>
<dbReference type="PaxDb" id="4932-YJL162C"/>
<dbReference type="PeptideAtlas" id="P46997"/>
<dbReference type="EnsemblFungi" id="YJL162C_mRNA">
    <property type="protein sequence ID" value="YJL162C"/>
    <property type="gene ID" value="YJL162C"/>
</dbReference>
<dbReference type="GeneID" id="853277"/>
<dbReference type="KEGG" id="sce:YJL162C"/>
<dbReference type="AGR" id="SGD:S000003698"/>
<dbReference type="SGD" id="S000003698">
    <property type="gene designation" value="JJJ2"/>
</dbReference>
<dbReference type="VEuPathDB" id="FungiDB:YJL162C"/>
<dbReference type="eggNOG" id="KOG0714">
    <property type="taxonomic scope" value="Eukaryota"/>
</dbReference>
<dbReference type="HOGENOM" id="CLU_490950_0_0_1"/>
<dbReference type="InParanoid" id="P46997"/>
<dbReference type="OMA" id="ARSKFEC"/>
<dbReference type="OrthoDB" id="10250354at2759"/>
<dbReference type="BioCyc" id="YEAST:G3O-31602-MONOMER"/>
<dbReference type="BioGRID-ORCS" id="853277">
    <property type="hits" value="0 hits in 10 CRISPR screens"/>
</dbReference>
<dbReference type="PRO" id="PR:P46997"/>
<dbReference type="Proteomes" id="UP000002311">
    <property type="component" value="Chromosome X"/>
</dbReference>
<dbReference type="RNAct" id="P46997">
    <property type="molecule type" value="protein"/>
</dbReference>
<dbReference type="GO" id="GO:0005737">
    <property type="term" value="C:cytoplasm"/>
    <property type="evidence" value="ECO:0007005"/>
    <property type="project" value="SGD"/>
</dbReference>
<dbReference type="GO" id="GO:0005634">
    <property type="term" value="C:nucleus"/>
    <property type="evidence" value="ECO:0007005"/>
    <property type="project" value="SGD"/>
</dbReference>
<dbReference type="GO" id="GO:0051082">
    <property type="term" value="F:unfolded protein binding"/>
    <property type="evidence" value="ECO:0000318"/>
    <property type="project" value="GO_Central"/>
</dbReference>
<dbReference type="GO" id="GO:0051085">
    <property type="term" value="P:chaperone cofactor-dependent protein refolding"/>
    <property type="evidence" value="ECO:0000318"/>
    <property type="project" value="GO_Central"/>
</dbReference>
<dbReference type="GO" id="GO:0042026">
    <property type="term" value="P:protein refolding"/>
    <property type="evidence" value="ECO:0000318"/>
    <property type="project" value="GO_Central"/>
</dbReference>
<dbReference type="CDD" id="cd06257">
    <property type="entry name" value="DnaJ"/>
    <property type="match status" value="1"/>
</dbReference>
<dbReference type="FunFam" id="1.10.287.110:FF:000147">
    <property type="entry name" value="JJJ2p protein"/>
    <property type="match status" value="1"/>
</dbReference>
<dbReference type="Gene3D" id="1.10.287.110">
    <property type="entry name" value="DnaJ domain"/>
    <property type="match status" value="1"/>
</dbReference>
<dbReference type="InterPro" id="IPR001623">
    <property type="entry name" value="DnaJ_domain"/>
</dbReference>
<dbReference type="InterPro" id="IPR018253">
    <property type="entry name" value="DnaJ_domain_CS"/>
</dbReference>
<dbReference type="InterPro" id="IPR036869">
    <property type="entry name" value="J_dom_sf"/>
</dbReference>
<dbReference type="PANTHER" id="PTHR43096">
    <property type="entry name" value="DNAJ HOMOLOG 1, MITOCHONDRIAL-RELATED"/>
    <property type="match status" value="1"/>
</dbReference>
<dbReference type="PANTHER" id="PTHR43096:SF52">
    <property type="entry name" value="DNAJ HOMOLOG 1, MITOCHONDRIAL-RELATED"/>
    <property type="match status" value="1"/>
</dbReference>
<dbReference type="Pfam" id="PF00226">
    <property type="entry name" value="DnaJ"/>
    <property type="match status" value="1"/>
</dbReference>
<dbReference type="PRINTS" id="PR00625">
    <property type="entry name" value="JDOMAIN"/>
</dbReference>
<dbReference type="SMART" id="SM00271">
    <property type="entry name" value="DnaJ"/>
    <property type="match status" value="1"/>
</dbReference>
<dbReference type="SUPFAM" id="SSF46565">
    <property type="entry name" value="Chaperone J-domain"/>
    <property type="match status" value="1"/>
</dbReference>
<dbReference type="PROSITE" id="PS00636">
    <property type="entry name" value="DNAJ_1"/>
    <property type="match status" value="1"/>
</dbReference>
<dbReference type="PROSITE" id="PS50076">
    <property type="entry name" value="DNAJ_2"/>
    <property type="match status" value="1"/>
</dbReference>
<reference key="1">
    <citation type="journal article" date="1996" name="EMBO J.">
        <title>Complete nucleotide sequence of Saccharomyces cerevisiae chromosome X.</title>
        <authorList>
            <person name="Galibert F."/>
            <person name="Alexandraki D."/>
            <person name="Baur A."/>
            <person name="Boles E."/>
            <person name="Chalwatzis N."/>
            <person name="Chuat J.-C."/>
            <person name="Coster F."/>
            <person name="Cziepluch C."/>
            <person name="de Haan M."/>
            <person name="Domdey H."/>
            <person name="Durand P."/>
            <person name="Entian K.-D."/>
            <person name="Gatius M."/>
            <person name="Goffeau A."/>
            <person name="Grivell L.A."/>
            <person name="Hennemann A."/>
            <person name="Herbert C.J."/>
            <person name="Heumann K."/>
            <person name="Hilger F."/>
            <person name="Hollenberg C.P."/>
            <person name="Huang M.-E."/>
            <person name="Jacq C."/>
            <person name="Jauniaux J.-C."/>
            <person name="Katsoulou C."/>
            <person name="Kirchrath L."/>
            <person name="Kleine K."/>
            <person name="Kordes E."/>
            <person name="Koetter P."/>
            <person name="Liebl S."/>
            <person name="Louis E.J."/>
            <person name="Manus V."/>
            <person name="Mewes H.-W."/>
            <person name="Miosga T."/>
            <person name="Obermaier B."/>
            <person name="Perea J."/>
            <person name="Pohl T.M."/>
            <person name="Portetelle D."/>
            <person name="Pujol A."/>
            <person name="Purnelle B."/>
            <person name="Ramezani Rad M."/>
            <person name="Rasmussen S.W."/>
            <person name="Rose M."/>
            <person name="Rossau R."/>
            <person name="Schaaff-Gerstenschlaeger I."/>
            <person name="Smits P.H.M."/>
            <person name="Scarcez T."/>
            <person name="Soriano N."/>
            <person name="To Van D."/>
            <person name="Tzermia M."/>
            <person name="Van Broekhoven A."/>
            <person name="Vandenbol M."/>
            <person name="Wedler H."/>
            <person name="von Wettstein D."/>
            <person name="Wambutt R."/>
            <person name="Zagulski M."/>
            <person name="Zollner A."/>
            <person name="Karpfinger-Hartl L."/>
        </authorList>
    </citation>
    <scope>NUCLEOTIDE SEQUENCE [LARGE SCALE GENOMIC DNA]</scope>
    <source>
        <strain>ATCC 204508 / S288c</strain>
    </source>
</reference>
<reference key="2">
    <citation type="journal article" date="2014" name="G3 (Bethesda)">
        <title>The reference genome sequence of Saccharomyces cerevisiae: Then and now.</title>
        <authorList>
            <person name="Engel S.R."/>
            <person name="Dietrich F.S."/>
            <person name="Fisk D.G."/>
            <person name="Binkley G."/>
            <person name="Balakrishnan R."/>
            <person name="Costanzo M.C."/>
            <person name="Dwight S.S."/>
            <person name="Hitz B.C."/>
            <person name="Karra K."/>
            <person name="Nash R.S."/>
            <person name="Weng S."/>
            <person name="Wong E.D."/>
            <person name="Lloyd P."/>
            <person name="Skrzypek M.S."/>
            <person name="Miyasato S.R."/>
            <person name="Simison M."/>
            <person name="Cherry J.M."/>
        </authorList>
    </citation>
    <scope>GENOME REANNOTATION</scope>
    <scope>SEQUENCE REVISION TO 433 AND 483</scope>
    <source>
        <strain>ATCC 204508 / S288c</strain>
    </source>
</reference>
<reference key="3">
    <citation type="journal article" date="2003" name="Nature">
        <title>Sequencing and comparison of yeast species to identify genes and regulatory elements.</title>
        <authorList>
            <person name="Kellis M."/>
            <person name="Patterson N."/>
            <person name="Endrizzi M."/>
            <person name="Birren B.W."/>
            <person name="Lander E.S."/>
        </authorList>
    </citation>
    <scope>IDENTIFICATION OF PROBABLE SEQUENCE ERRORS</scope>
</reference>
<reference key="4">
    <citation type="journal article" date="2003" name="Nature">
        <title>Global analysis of protein localization in budding yeast.</title>
        <authorList>
            <person name="Huh W.-K."/>
            <person name="Falvo J.V."/>
            <person name="Gerke L.C."/>
            <person name="Carroll A.S."/>
            <person name="Howson R.W."/>
            <person name="Weissman J.S."/>
            <person name="O'Shea E.K."/>
        </authorList>
    </citation>
    <scope>SUBCELLULAR LOCATION [LARGE SCALE ANALYSIS]</scope>
</reference>
<reference key="5">
    <citation type="journal article" date="2003" name="Nature">
        <title>Global analysis of protein expression in yeast.</title>
        <authorList>
            <person name="Ghaemmaghami S."/>
            <person name="Huh W.-K."/>
            <person name="Bower K."/>
            <person name="Howson R.W."/>
            <person name="Belle A."/>
            <person name="Dephoure N."/>
            <person name="O'Shea E.K."/>
            <person name="Weissman J.S."/>
        </authorList>
    </citation>
    <scope>LEVEL OF PROTEIN EXPRESSION [LARGE SCALE ANALYSIS]</scope>
</reference>
<reference key="6">
    <citation type="journal article" date="2004" name="EMBO Rep.">
        <title>The J-protein family: modulating protein assembly, disassembly and translocation.</title>
        <authorList>
            <person name="Walsh P."/>
            <person name="Bursac D."/>
            <person name="Law Y.C."/>
            <person name="Cyr D."/>
            <person name="Lithgow T."/>
        </authorList>
    </citation>
    <scope>GENE NAME</scope>
</reference>
<reference key="7">
    <citation type="journal article" date="2008" name="Mol. Cell. Proteomics">
        <title>A multidimensional chromatography technology for in-depth phosphoproteome analysis.</title>
        <authorList>
            <person name="Albuquerque C.P."/>
            <person name="Smolka M.B."/>
            <person name="Payne S.H."/>
            <person name="Bafna V."/>
            <person name="Eng J."/>
            <person name="Zhou H."/>
        </authorList>
    </citation>
    <scope>PHOSPHORYLATION [LARGE SCALE ANALYSIS] AT SER-229</scope>
    <scope>IDENTIFICATION BY MASS SPECTROMETRY [LARGE SCALE ANALYSIS]</scope>
</reference>
<reference key="8">
    <citation type="journal article" date="2009" name="Science">
        <title>Global analysis of Cdk1 substrate phosphorylation sites provides insights into evolution.</title>
        <authorList>
            <person name="Holt L.J."/>
            <person name="Tuch B.B."/>
            <person name="Villen J."/>
            <person name="Johnson A.D."/>
            <person name="Gygi S.P."/>
            <person name="Morgan D.O."/>
        </authorList>
    </citation>
    <scope>IDENTIFICATION BY MASS SPECTROMETRY [LARGE SCALE ANALYSIS]</scope>
</reference>
<keyword id="KW-0143">Chaperone</keyword>
<keyword id="KW-0963">Cytoplasm</keyword>
<keyword id="KW-0539">Nucleus</keyword>
<keyword id="KW-0597">Phosphoprotein</keyword>
<keyword id="KW-1185">Reference proteome</keyword>
<gene>
    <name type="primary">JJJ2</name>
    <name type="ordered locus">YJL162C</name>
    <name type="ORF">J0549</name>
</gene>